<proteinExistence type="evidence at protein level"/>
<reference key="1">
    <citation type="journal article" date="2001" name="Lancet">
        <title>Whole genome sequencing of meticillin-resistant Staphylococcus aureus.</title>
        <authorList>
            <person name="Kuroda M."/>
            <person name="Ohta T."/>
            <person name="Uchiyama I."/>
            <person name="Baba T."/>
            <person name="Yuzawa H."/>
            <person name="Kobayashi I."/>
            <person name="Cui L."/>
            <person name="Oguchi A."/>
            <person name="Aoki K."/>
            <person name="Nagai Y."/>
            <person name="Lian J.-Q."/>
            <person name="Ito T."/>
            <person name="Kanamori M."/>
            <person name="Matsumaru H."/>
            <person name="Maruyama A."/>
            <person name="Murakami H."/>
            <person name="Hosoyama A."/>
            <person name="Mizutani-Ui Y."/>
            <person name="Takahashi N.K."/>
            <person name="Sawano T."/>
            <person name="Inoue R."/>
            <person name="Kaito C."/>
            <person name="Sekimizu K."/>
            <person name="Hirakawa H."/>
            <person name="Kuhara S."/>
            <person name="Goto S."/>
            <person name="Yabuzaki J."/>
            <person name="Kanehisa M."/>
            <person name="Yamashita A."/>
            <person name="Oshima K."/>
            <person name="Furuya K."/>
            <person name="Yoshino C."/>
            <person name="Shiba T."/>
            <person name="Hattori M."/>
            <person name="Ogasawara N."/>
            <person name="Hayashi H."/>
            <person name="Hiramatsu K."/>
        </authorList>
    </citation>
    <scope>NUCLEOTIDE SEQUENCE [LARGE SCALE GENOMIC DNA]</scope>
    <source>
        <strain>N315</strain>
    </source>
</reference>
<reference key="2">
    <citation type="submission" date="2007-10" db="UniProtKB">
        <title>Shotgun proteomic analysis of total and membrane protein extracts of S. aureus strain N315.</title>
        <authorList>
            <person name="Vaezzadeh A.R."/>
            <person name="Deshusses J."/>
            <person name="Lescuyer P."/>
            <person name="Hochstrasser D.F."/>
        </authorList>
    </citation>
    <scope>IDENTIFICATION BY MASS SPECTROMETRY [LARGE SCALE ANALYSIS]</scope>
    <source>
        <strain>N315</strain>
    </source>
</reference>
<evidence type="ECO:0000255" key="1">
    <source>
        <dbReference type="HAMAP-Rule" id="MF_00583"/>
    </source>
</evidence>
<accession>P65237</accession>
<accession>Q99WA3</accession>
<comment type="function">
    <text evidence="1">Involved in the biosynthesis of the central metabolite phospho-alpha-D-ribosyl-1-pyrophosphate (PRPP) via the transfer of pyrophosphoryl group from ATP to 1-hydroxyl of ribose-5-phosphate (Rib-5-P).</text>
</comment>
<comment type="catalytic activity">
    <reaction evidence="1">
        <text>D-ribose 5-phosphate + ATP = 5-phospho-alpha-D-ribose 1-diphosphate + AMP + H(+)</text>
        <dbReference type="Rhea" id="RHEA:15609"/>
        <dbReference type="ChEBI" id="CHEBI:15378"/>
        <dbReference type="ChEBI" id="CHEBI:30616"/>
        <dbReference type="ChEBI" id="CHEBI:58017"/>
        <dbReference type="ChEBI" id="CHEBI:78346"/>
        <dbReference type="ChEBI" id="CHEBI:456215"/>
        <dbReference type="EC" id="2.7.6.1"/>
    </reaction>
</comment>
<comment type="cofactor">
    <cofactor evidence="1">
        <name>Mg(2+)</name>
        <dbReference type="ChEBI" id="CHEBI:18420"/>
    </cofactor>
    <text evidence="1">Binds 2 Mg(2+) ions per subunit.</text>
</comment>
<comment type="pathway">
    <text evidence="1">Metabolic intermediate biosynthesis; 5-phospho-alpha-D-ribose 1-diphosphate biosynthesis; 5-phospho-alpha-D-ribose 1-diphosphate from D-ribose 5-phosphate (route I): step 1/1.</text>
</comment>
<comment type="subunit">
    <text evidence="1">Homohexamer.</text>
</comment>
<comment type="subcellular location">
    <subcellularLocation>
        <location evidence="1">Cytoplasm</location>
    </subcellularLocation>
</comment>
<comment type="similarity">
    <text evidence="1">Belongs to the ribose-phosphate pyrophosphokinase family. Class I subfamily.</text>
</comment>
<organism>
    <name type="scientific">Staphylococcus aureus (strain N315)</name>
    <dbReference type="NCBI Taxonomy" id="158879"/>
    <lineage>
        <taxon>Bacteria</taxon>
        <taxon>Bacillati</taxon>
        <taxon>Bacillota</taxon>
        <taxon>Bacilli</taxon>
        <taxon>Bacillales</taxon>
        <taxon>Staphylococcaceae</taxon>
        <taxon>Staphylococcus</taxon>
    </lineage>
</organism>
<protein>
    <recommendedName>
        <fullName evidence="1">Ribose-phosphate pyrophosphokinase</fullName>
        <shortName evidence="1">RPPK</shortName>
        <ecNumber evidence="1">2.7.6.1</ecNumber>
    </recommendedName>
    <alternativeName>
        <fullName evidence="1">5-phospho-D-ribosyl alpha-1-diphosphate synthase</fullName>
    </alternativeName>
    <alternativeName>
        <fullName evidence="1">Phosphoribosyl diphosphate synthase</fullName>
    </alternativeName>
    <alternativeName>
        <fullName evidence="1">Phosphoribosyl pyrophosphate synthase</fullName>
        <shortName evidence="1">P-Rib-PP synthase</shortName>
        <shortName evidence="1">PRPP synthase</shortName>
        <shortName evidence="1">PRPPase</shortName>
    </alternativeName>
</protein>
<name>KPRS_STAAN</name>
<sequence length="321" mass="35284">MLNNEYKNSSLKIFSLKGNEALAQEVADQVGIELGKCSVKRFSDGEIQINIEESIRGCDVFIIQPTSYPVNLHLMELLIMIDACKRASAATINIVVPYYGYARQDRKARSREPITAKLVANLIETAGATRMIALDLHAPQIQGFFDIPIDHLMGVPILAKHFKDDPNINPEECVVVSPDHGGVTRARKLADILKTPIAIIDKRRPRPNVAEVMNIVGEIEGRTAIIIDDIIDTAGTITLAAQALKDKGAKEVYACCTHPVLSGPAKERIENSAIKELIVTNSIHLDEDRKPSNTKELSVAGLIAQAIIRVYERESVSVLFD</sequence>
<keyword id="KW-0067">ATP-binding</keyword>
<keyword id="KW-0963">Cytoplasm</keyword>
<keyword id="KW-0418">Kinase</keyword>
<keyword id="KW-0460">Magnesium</keyword>
<keyword id="KW-0479">Metal-binding</keyword>
<keyword id="KW-0545">Nucleotide biosynthesis</keyword>
<keyword id="KW-0547">Nucleotide-binding</keyword>
<keyword id="KW-0808">Transferase</keyword>
<feature type="chain" id="PRO_0000141188" description="Ribose-phosphate pyrophosphokinase">
    <location>
        <begin position="1"/>
        <end position="321"/>
    </location>
</feature>
<feature type="active site" evidence="1">
    <location>
        <position position="202"/>
    </location>
</feature>
<feature type="binding site" evidence="1">
    <location>
        <begin position="44"/>
        <end position="46"/>
    </location>
    <ligand>
        <name>ATP</name>
        <dbReference type="ChEBI" id="CHEBI:30616"/>
    </ligand>
</feature>
<feature type="binding site" evidence="1">
    <location>
        <begin position="103"/>
        <end position="104"/>
    </location>
    <ligand>
        <name>ATP</name>
        <dbReference type="ChEBI" id="CHEBI:30616"/>
    </ligand>
</feature>
<feature type="binding site" evidence="1">
    <location>
        <position position="137"/>
    </location>
    <ligand>
        <name>Mg(2+)</name>
        <dbReference type="ChEBI" id="CHEBI:18420"/>
        <label>1</label>
    </ligand>
</feature>
<feature type="binding site" evidence="1">
    <location>
        <position position="179"/>
    </location>
    <ligand>
        <name>Mg(2+)</name>
        <dbReference type="ChEBI" id="CHEBI:18420"/>
        <label>2</label>
    </ligand>
</feature>
<feature type="binding site" evidence="1">
    <location>
        <position position="204"/>
    </location>
    <ligand>
        <name>D-ribose 5-phosphate</name>
        <dbReference type="ChEBI" id="CHEBI:78346"/>
    </ligand>
</feature>
<feature type="binding site" evidence="1">
    <location>
        <position position="228"/>
    </location>
    <ligand>
        <name>D-ribose 5-phosphate</name>
        <dbReference type="ChEBI" id="CHEBI:78346"/>
    </ligand>
</feature>
<feature type="binding site" evidence="1">
    <location>
        <begin position="232"/>
        <end position="236"/>
    </location>
    <ligand>
        <name>D-ribose 5-phosphate</name>
        <dbReference type="ChEBI" id="CHEBI:78346"/>
    </ligand>
</feature>
<gene>
    <name evidence="1" type="primary">prs</name>
    <name type="ordered locus">SA0458</name>
</gene>
<dbReference type="EC" id="2.7.6.1" evidence="1"/>
<dbReference type="EMBL" id="BA000018">
    <property type="protein sequence ID" value="BAB41688.1"/>
    <property type="molecule type" value="Genomic_DNA"/>
</dbReference>
<dbReference type="PIR" id="E89816">
    <property type="entry name" value="E89816"/>
</dbReference>
<dbReference type="RefSeq" id="WP_000933774.1">
    <property type="nucleotide sequence ID" value="NC_002745.2"/>
</dbReference>
<dbReference type="SMR" id="P65237"/>
<dbReference type="EnsemblBacteria" id="BAB41688">
    <property type="protein sequence ID" value="BAB41688"/>
    <property type="gene ID" value="BAB41688"/>
</dbReference>
<dbReference type="KEGG" id="sau:SA0458"/>
<dbReference type="HOGENOM" id="CLU_033546_1_0_9"/>
<dbReference type="UniPathway" id="UPA00087">
    <property type="reaction ID" value="UER00172"/>
</dbReference>
<dbReference type="GO" id="GO:0005737">
    <property type="term" value="C:cytoplasm"/>
    <property type="evidence" value="ECO:0007669"/>
    <property type="project" value="UniProtKB-SubCell"/>
</dbReference>
<dbReference type="GO" id="GO:0002189">
    <property type="term" value="C:ribose phosphate diphosphokinase complex"/>
    <property type="evidence" value="ECO:0007669"/>
    <property type="project" value="TreeGrafter"/>
</dbReference>
<dbReference type="GO" id="GO:0005524">
    <property type="term" value="F:ATP binding"/>
    <property type="evidence" value="ECO:0007669"/>
    <property type="project" value="UniProtKB-KW"/>
</dbReference>
<dbReference type="GO" id="GO:0016301">
    <property type="term" value="F:kinase activity"/>
    <property type="evidence" value="ECO:0007669"/>
    <property type="project" value="UniProtKB-KW"/>
</dbReference>
<dbReference type="GO" id="GO:0000287">
    <property type="term" value="F:magnesium ion binding"/>
    <property type="evidence" value="ECO:0007669"/>
    <property type="project" value="UniProtKB-UniRule"/>
</dbReference>
<dbReference type="GO" id="GO:0004749">
    <property type="term" value="F:ribose phosphate diphosphokinase activity"/>
    <property type="evidence" value="ECO:0007669"/>
    <property type="project" value="UniProtKB-UniRule"/>
</dbReference>
<dbReference type="GO" id="GO:0006015">
    <property type="term" value="P:5-phosphoribose 1-diphosphate biosynthetic process"/>
    <property type="evidence" value="ECO:0007669"/>
    <property type="project" value="UniProtKB-UniRule"/>
</dbReference>
<dbReference type="GO" id="GO:0006164">
    <property type="term" value="P:purine nucleotide biosynthetic process"/>
    <property type="evidence" value="ECO:0007669"/>
    <property type="project" value="TreeGrafter"/>
</dbReference>
<dbReference type="GO" id="GO:0009156">
    <property type="term" value="P:ribonucleoside monophosphate biosynthetic process"/>
    <property type="evidence" value="ECO:0007669"/>
    <property type="project" value="InterPro"/>
</dbReference>
<dbReference type="CDD" id="cd06223">
    <property type="entry name" value="PRTases_typeI"/>
    <property type="match status" value="1"/>
</dbReference>
<dbReference type="FunFam" id="3.40.50.2020:FF:000002">
    <property type="entry name" value="Ribose-phosphate pyrophosphokinase"/>
    <property type="match status" value="1"/>
</dbReference>
<dbReference type="FunFam" id="3.40.50.2020:FF:000014">
    <property type="entry name" value="Ribose-phosphate pyrophosphokinase 1"/>
    <property type="match status" value="1"/>
</dbReference>
<dbReference type="Gene3D" id="3.40.50.2020">
    <property type="match status" value="2"/>
</dbReference>
<dbReference type="HAMAP" id="MF_00583_B">
    <property type="entry name" value="RibP_PPkinase_B"/>
    <property type="match status" value="1"/>
</dbReference>
<dbReference type="InterPro" id="IPR000842">
    <property type="entry name" value="PRib_PP_synth_CS"/>
</dbReference>
<dbReference type="InterPro" id="IPR029099">
    <property type="entry name" value="Pribosyltran_N"/>
</dbReference>
<dbReference type="InterPro" id="IPR000836">
    <property type="entry name" value="PRibTrfase_dom"/>
</dbReference>
<dbReference type="InterPro" id="IPR029057">
    <property type="entry name" value="PRTase-like"/>
</dbReference>
<dbReference type="InterPro" id="IPR005946">
    <property type="entry name" value="Rib-P_diPkinase"/>
</dbReference>
<dbReference type="InterPro" id="IPR037515">
    <property type="entry name" value="Rib-P_diPkinase_bac"/>
</dbReference>
<dbReference type="NCBIfam" id="NF002320">
    <property type="entry name" value="PRK01259.1"/>
    <property type="match status" value="1"/>
</dbReference>
<dbReference type="NCBIfam" id="NF002618">
    <property type="entry name" value="PRK02269.1"/>
    <property type="match status" value="1"/>
</dbReference>
<dbReference type="NCBIfam" id="TIGR01251">
    <property type="entry name" value="ribP_PPkin"/>
    <property type="match status" value="1"/>
</dbReference>
<dbReference type="PANTHER" id="PTHR10210">
    <property type="entry name" value="RIBOSE-PHOSPHATE DIPHOSPHOKINASE FAMILY MEMBER"/>
    <property type="match status" value="1"/>
</dbReference>
<dbReference type="PANTHER" id="PTHR10210:SF41">
    <property type="entry name" value="RIBOSE-PHOSPHATE PYROPHOSPHOKINASE 1, CHLOROPLASTIC"/>
    <property type="match status" value="1"/>
</dbReference>
<dbReference type="Pfam" id="PF14572">
    <property type="entry name" value="Pribosyl_synth"/>
    <property type="match status" value="1"/>
</dbReference>
<dbReference type="Pfam" id="PF13793">
    <property type="entry name" value="Pribosyltran_N"/>
    <property type="match status" value="1"/>
</dbReference>
<dbReference type="SMART" id="SM01400">
    <property type="entry name" value="Pribosyltran_N"/>
    <property type="match status" value="1"/>
</dbReference>
<dbReference type="SUPFAM" id="SSF53271">
    <property type="entry name" value="PRTase-like"/>
    <property type="match status" value="1"/>
</dbReference>
<dbReference type="PROSITE" id="PS00114">
    <property type="entry name" value="PRPP_SYNTHASE"/>
    <property type="match status" value="1"/>
</dbReference>